<name>PRRT3_MOUSE</name>
<accession>Q6PE13</accession>
<feature type="signal peptide" evidence="2">
    <location>
        <begin position="1"/>
        <end position="27"/>
    </location>
</feature>
<feature type="chain" id="PRO_0000251979" description="Proline-rich transmembrane protein 3">
    <location>
        <begin position="28"/>
        <end position="971"/>
    </location>
</feature>
<feature type="topological domain" description="Extracellular" evidence="2">
    <location>
        <begin position="28"/>
        <end position="467"/>
    </location>
</feature>
<feature type="transmembrane region" description="Helical" evidence="2">
    <location>
        <begin position="468"/>
        <end position="488"/>
    </location>
</feature>
<feature type="topological domain" description="Cytoplasmic" evidence="2">
    <location>
        <begin position="489"/>
        <end position="491"/>
    </location>
</feature>
<feature type="transmembrane region" description="Helical" evidence="2">
    <location>
        <begin position="492"/>
        <end position="512"/>
    </location>
</feature>
<feature type="topological domain" description="Extracellular" evidence="2">
    <location>
        <begin position="513"/>
        <end position="532"/>
    </location>
</feature>
<feature type="transmembrane region" description="Helical" evidence="2">
    <location>
        <begin position="533"/>
        <end position="553"/>
    </location>
</feature>
<feature type="topological domain" description="Cytoplasmic" evidence="2">
    <location>
        <begin position="554"/>
        <end position="560"/>
    </location>
</feature>
<feature type="transmembrane region" description="Helical" evidence="2">
    <location>
        <begin position="561"/>
        <end position="581"/>
    </location>
</feature>
<feature type="topological domain" description="Extracellular" evidence="2">
    <location>
        <begin position="582"/>
        <end position="588"/>
    </location>
</feature>
<feature type="transmembrane region" description="Helical" evidence="2">
    <location>
        <begin position="589"/>
        <end position="609"/>
    </location>
</feature>
<feature type="topological domain" description="Cytoplasmic" evidence="2">
    <location>
        <begin position="610"/>
        <end position="628"/>
    </location>
</feature>
<feature type="transmembrane region" description="Helical" evidence="2">
    <location>
        <begin position="629"/>
        <end position="649"/>
    </location>
</feature>
<feature type="topological domain" description="Extracellular" evidence="2">
    <location>
        <begin position="650"/>
        <end position="669"/>
    </location>
</feature>
<feature type="transmembrane region" description="Helical" evidence="2">
    <location>
        <begin position="670"/>
        <end position="690"/>
    </location>
</feature>
<feature type="topological domain" description="Cytoplasmic" evidence="2">
    <location>
        <begin position="691"/>
        <end position="971"/>
    </location>
</feature>
<feature type="region of interest" description="Disordered" evidence="3">
    <location>
        <begin position="60"/>
        <end position="94"/>
    </location>
</feature>
<feature type="region of interest" description="Disordered" evidence="3">
    <location>
        <begin position="114"/>
        <end position="137"/>
    </location>
</feature>
<feature type="region of interest" description="Disordered" evidence="3">
    <location>
        <begin position="236"/>
        <end position="256"/>
    </location>
</feature>
<feature type="region of interest" description="Disordered" evidence="3">
    <location>
        <begin position="272"/>
        <end position="445"/>
    </location>
</feature>
<feature type="region of interest" description="Disordered" evidence="3">
    <location>
        <begin position="753"/>
        <end position="799"/>
    </location>
</feature>
<feature type="region of interest" description="Disordered" evidence="3">
    <location>
        <begin position="832"/>
        <end position="855"/>
    </location>
</feature>
<feature type="region of interest" description="Disordered" evidence="3">
    <location>
        <begin position="927"/>
        <end position="971"/>
    </location>
</feature>
<feature type="compositionally biased region" description="Low complexity" evidence="3">
    <location>
        <begin position="239"/>
        <end position="252"/>
    </location>
</feature>
<feature type="compositionally biased region" description="Polar residues" evidence="3">
    <location>
        <begin position="290"/>
        <end position="300"/>
    </location>
</feature>
<feature type="compositionally biased region" description="Polar residues" evidence="3">
    <location>
        <begin position="363"/>
        <end position="372"/>
    </location>
</feature>
<feature type="compositionally biased region" description="Polar residues" evidence="3">
    <location>
        <begin position="401"/>
        <end position="417"/>
    </location>
</feature>
<feature type="compositionally biased region" description="Low complexity" evidence="3">
    <location>
        <begin position="427"/>
        <end position="445"/>
    </location>
</feature>
<feature type="compositionally biased region" description="Polar residues" evidence="3">
    <location>
        <begin position="951"/>
        <end position="971"/>
    </location>
</feature>
<feature type="modified residue" description="Phosphoserine" evidence="5">
    <location>
        <position position="768"/>
    </location>
</feature>
<feature type="modified residue" description="Omega-N-methylarginine" evidence="6">
    <location>
        <position position="771"/>
    </location>
</feature>
<feature type="modified residue" description="Phosphoserine" evidence="5">
    <location>
        <position position="780"/>
    </location>
</feature>
<feature type="modified residue" description="Phosphoserine" evidence="5">
    <location>
        <position position="783"/>
    </location>
</feature>
<feature type="modified residue" description="Phosphoserine" evidence="5">
    <location>
        <position position="789"/>
    </location>
</feature>
<feature type="modified residue" description="Phosphoserine" evidence="5">
    <location>
        <position position="799"/>
    </location>
</feature>
<feature type="modified residue" description="Phosphoserine" evidence="1">
    <location>
        <position position="806"/>
    </location>
</feature>
<feature type="modified residue" description="Phosphoserine" evidence="5">
    <location>
        <position position="845"/>
    </location>
</feature>
<feature type="modified residue" description="Phosphoserine" evidence="5">
    <location>
        <position position="865"/>
    </location>
</feature>
<feature type="modified residue" description="Phosphoserine" evidence="5">
    <location>
        <position position="894"/>
    </location>
</feature>
<feature type="modified residue" description="Phosphoserine" evidence="5">
    <location>
        <position position="895"/>
    </location>
</feature>
<feature type="modified residue" description="Phosphoserine" evidence="5">
    <location>
        <position position="903"/>
    </location>
</feature>
<feature type="glycosylation site" description="N-linked (GlcNAc...) asparagine" evidence="2">
    <location>
        <position position="58"/>
    </location>
</feature>
<feature type="glycosylation site" description="N-linked (GlcNAc...) asparagine" evidence="2">
    <location>
        <position position="369"/>
    </location>
</feature>
<comment type="subcellular location">
    <subcellularLocation>
        <location evidence="4">Membrane</location>
        <topology evidence="4">Multi-pass membrane protein</topology>
    </subcellularLocation>
</comment>
<proteinExistence type="evidence at protein level"/>
<reference key="1">
    <citation type="journal article" date="2004" name="Genome Res.">
        <title>The status, quality, and expansion of the NIH full-length cDNA project: the Mammalian Gene Collection (MGC).</title>
        <authorList>
            <consortium name="The MGC Project Team"/>
        </authorList>
    </citation>
    <scope>NUCLEOTIDE SEQUENCE [LARGE SCALE MRNA]</scope>
    <source>
        <strain>C57BL/6J</strain>
        <tissue>Brain</tissue>
    </source>
</reference>
<reference key="2">
    <citation type="journal article" date="2007" name="Mol. Cell. Proteomics">
        <title>Qualitative and quantitative analyses of protein phosphorylation in naive and stimulated mouse synaptosomal preparations.</title>
        <authorList>
            <person name="Munton R.P."/>
            <person name="Tweedie-Cullen R."/>
            <person name="Livingstone-Zatchej M."/>
            <person name="Weinandy F."/>
            <person name="Waidelich M."/>
            <person name="Longo D."/>
            <person name="Gehrig P."/>
            <person name="Potthast F."/>
            <person name="Rutishauser D."/>
            <person name="Gerrits B."/>
            <person name="Panse C."/>
            <person name="Schlapbach R."/>
            <person name="Mansuy I.M."/>
        </authorList>
    </citation>
    <scope>IDENTIFICATION BY MASS SPECTROMETRY [LARGE SCALE ANALYSIS]</scope>
    <source>
        <tissue>Brain cortex</tissue>
    </source>
</reference>
<reference key="3">
    <citation type="journal article" date="2010" name="Cell">
        <title>A tissue-specific atlas of mouse protein phosphorylation and expression.</title>
        <authorList>
            <person name="Huttlin E.L."/>
            <person name="Jedrychowski M.P."/>
            <person name="Elias J.E."/>
            <person name="Goswami T."/>
            <person name="Rad R."/>
            <person name="Beausoleil S.A."/>
            <person name="Villen J."/>
            <person name="Haas W."/>
            <person name="Sowa M.E."/>
            <person name="Gygi S.P."/>
        </authorList>
    </citation>
    <scope>PHOSPHORYLATION [LARGE SCALE ANALYSIS] AT SER-768; SER-780; SER-783; SER-789; SER-799; SER-845; SER-865; SER-894; SER-895 AND SER-903</scope>
    <scope>IDENTIFICATION BY MASS SPECTROMETRY [LARGE SCALE ANALYSIS]</scope>
    <source>
        <tissue>Brain</tissue>
    </source>
</reference>
<reference key="4">
    <citation type="journal article" date="2014" name="Mol. Cell. Proteomics">
        <title>Immunoaffinity enrichment and mass spectrometry analysis of protein methylation.</title>
        <authorList>
            <person name="Guo A."/>
            <person name="Gu H."/>
            <person name="Zhou J."/>
            <person name="Mulhern D."/>
            <person name="Wang Y."/>
            <person name="Lee K.A."/>
            <person name="Yang V."/>
            <person name="Aguiar M."/>
            <person name="Kornhauser J."/>
            <person name="Jia X."/>
            <person name="Ren J."/>
            <person name="Beausoleil S.A."/>
            <person name="Silva J.C."/>
            <person name="Vemulapalli V."/>
            <person name="Bedford M.T."/>
            <person name="Comb M.J."/>
        </authorList>
    </citation>
    <scope>METHYLATION [LARGE SCALE ANALYSIS] AT ARG-771</scope>
    <scope>IDENTIFICATION BY MASS SPECTROMETRY [LARGE SCALE ANALYSIS]</scope>
    <source>
        <tissue>Brain</tissue>
    </source>
</reference>
<dbReference type="EMBL" id="BC058349">
    <property type="protein sequence ID" value="AAH58349.1"/>
    <property type="molecule type" value="mRNA"/>
</dbReference>
<dbReference type="CCDS" id="CCDS20424.1"/>
<dbReference type="RefSeq" id="NP_001276629.1">
    <property type="nucleotide sequence ID" value="NM_001289700.1"/>
</dbReference>
<dbReference type="RefSeq" id="NP_766075.2">
    <property type="nucleotide sequence ID" value="NM_172487.4"/>
</dbReference>
<dbReference type="RefSeq" id="XP_006505906.1">
    <property type="nucleotide sequence ID" value="XM_006505843.5"/>
</dbReference>
<dbReference type="RefSeq" id="XP_030111159.1">
    <property type="nucleotide sequence ID" value="XM_030255299.2"/>
</dbReference>
<dbReference type="BioGRID" id="229172">
    <property type="interactions" value="1"/>
</dbReference>
<dbReference type="FunCoup" id="Q6PE13">
    <property type="interactions" value="23"/>
</dbReference>
<dbReference type="IntAct" id="Q6PE13">
    <property type="interactions" value="1"/>
</dbReference>
<dbReference type="MINT" id="Q6PE13"/>
<dbReference type="STRING" id="10090.ENSMUSP00000145443"/>
<dbReference type="GlyCosmos" id="Q6PE13">
    <property type="glycosylation" value="2 sites, No reported glycans"/>
</dbReference>
<dbReference type="GlyGen" id="Q6PE13">
    <property type="glycosylation" value="8 sites, 4 N-linked glycans (4 sites), 1 O-linked glycan (1 site)"/>
</dbReference>
<dbReference type="iPTMnet" id="Q6PE13"/>
<dbReference type="PhosphoSitePlus" id="Q6PE13"/>
<dbReference type="SwissPalm" id="Q6PE13"/>
<dbReference type="PaxDb" id="10090-ENSMUSP00000098620"/>
<dbReference type="PeptideAtlas" id="Q6PE13"/>
<dbReference type="ProteomicsDB" id="291672"/>
<dbReference type="Antibodypedia" id="25871">
    <property type="antibodies" value="25 antibodies from 10 providers"/>
</dbReference>
<dbReference type="Ensembl" id="ENSMUST00000101059.4">
    <property type="protein sequence ID" value="ENSMUSP00000098620.2"/>
    <property type="gene ID" value="ENSMUSG00000045009.10"/>
</dbReference>
<dbReference type="GeneID" id="210673"/>
<dbReference type="KEGG" id="mmu:210673"/>
<dbReference type="UCSC" id="uc009dgp.2">
    <property type="organism name" value="mouse"/>
</dbReference>
<dbReference type="AGR" id="MGI:2444810"/>
<dbReference type="CTD" id="285368"/>
<dbReference type="MGI" id="MGI:2444810">
    <property type="gene designation" value="Prrt3"/>
</dbReference>
<dbReference type="VEuPathDB" id="HostDB:ENSMUSG00000045009"/>
<dbReference type="eggNOG" id="ENOG502QSMJ">
    <property type="taxonomic scope" value="Eukaryota"/>
</dbReference>
<dbReference type="GeneTree" id="ENSGT00730000111360"/>
<dbReference type="HOGENOM" id="CLU_304190_0_0_1"/>
<dbReference type="InParanoid" id="Q6PE13"/>
<dbReference type="OrthoDB" id="10066605at2759"/>
<dbReference type="PhylomeDB" id="Q6PE13"/>
<dbReference type="TreeFam" id="TF333410"/>
<dbReference type="BioGRID-ORCS" id="210673">
    <property type="hits" value="2 hits in 76 CRISPR screens"/>
</dbReference>
<dbReference type="ChiTaRS" id="Prrt3">
    <property type="organism name" value="mouse"/>
</dbReference>
<dbReference type="PRO" id="PR:Q6PE13"/>
<dbReference type="Proteomes" id="UP000000589">
    <property type="component" value="Chromosome 6"/>
</dbReference>
<dbReference type="RNAct" id="Q6PE13">
    <property type="molecule type" value="protein"/>
</dbReference>
<dbReference type="Bgee" id="ENSMUSG00000045009">
    <property type="expression patterns" value="Expressed in lateral geniculate body and 95 other cell types or tissues"/>
</dbReference>
<dbReference type="ExpressionAtlas" id="Q6PE13">
    <property type="expression patterns" value="baseline and differential"/>
</dbReference>
<dbReference type="GO" id="GO:0016020">
    <property type="term" value="C:membrane"/>
    <property type="evidence" value="ECO:0007669"/>
    <property type="project" value="UniProtKB-SubCell"/>
</dbReference>
<dbReference type="InterPro" id="IPR043242">
    <property type="entry name" value="PRRT3"/>
</dbReference>
<dbReference type="PANTHER" id="PTHR47400">
    <property type="entry name" value="PROLINE-RICH TRANSMEMBRANE PROTEIN 3"/>
    <property type="match status" value="1"/>
</dbReference>
<dbReference type="PANTHER" id="PTHR47400:SF1">
    <property type="entry name" value="PROLINE-RICH TRANSMEMBRANE PROTEIN 3"/>
    <property type="match status" value="1"/>
</dbReference>
<evidence type="ECO:0000250" key="1">
    <source>
        <dbReference type="UniProtKB" id="Q5FWE3"/>
    </source>
</evidence>
<evidence type="ECO:0000255" key="2"/>
<evidence type="ECO:0000256" key="3">
    <source>
        <dbReference type="SAM" id="MobiDB-lite"/>
    </source>
</evidence>
<evidence type="ECO:0000305" key="4"/>
<evidence type="ECO:0007744" key="5">
    <source>
    </source>
</evidence>
<evidence type="ECO:0007744" key="6">
    <source>
    </source>
</evidence>
<gene>
    <name type="primary">Prrt3</name>
</gene>
<keyword id="KW-0325">Glycoprotein</keyword>
<keyword id="KW-0472">Membrane</keyword>
<keyword id="KW-0488">Methylation</keyword>
<keyword id="KW-0597">Phosphoprotein</keyword>
<keyword id="KW-1185">Reference proteome</keyword>
<keyword id="KW-0732">Signal</keyword>
<keyword id="KW-0812">Transmembrane</keyword>
<keyword id="KW-1133">Transmembrane helix</keyword>
<organism>
    <name type="scientific">Mus musculus</name>
    <name type="common">Mouse</name>
    <dbReference type="NCBI Taxonomy" id="10090"/>
    <lineage>
        <taxon>Eukaryota</taxon>
        <taxon>Metazoa</taxon>
        <taxon>Chordata</taxon>
        <taxon>Craniata</taxon>
        <taxon>Vertebrata</taxon>
        <taxon>Euteleostomi</taxon>
        <taxon>Mammalia</taxon>
        <taxon>Eutheria</taxon>
        <taxon>Euarchontoglires</taxon>
        <taxon>Glires</taxon>
        <taxon>Rodentia</taxon>
        <taxon>Myomorpha</taxon>
        <taxon>Muroidea</taxon>
        <taxon>Muridae</taxon>
        <taxon>Murinae</taxon>
        <taxon>Mus</taxon>
        <taxon>Mus</taxon>
    </lineage>
</organism>
<sequence>MAPSPQACTSPLLLLLLPCLGAGPALGRGLPRPLENSEPHMIPSESQTFDLFWEKLRNESSWHSGDPQARAEGPKKPADPYLGPALHGPKAAPGVQGERLLRADDLQLARAFTSQGWTGPPDSQELLEPEAPEPHPVRAPRLTLVTTTPSSLLSAAILSTASQKPGGTAGQQPARNEELIMVKAETHITQASPWDFQGSSHTPVPETDAVRTLVLGKQGGHEQGFQEAVQGPLLTQQDPVVPGVGSTPPVKVESTPEPGAQLDLALVRSLPLPEGLPAEPPKTGAGDTWEVSSLGPQPEQTDLLGGQDSPAPQPIPPSASDTSDGHLRPVSSLNGADPISPQRVRGAMEAPGTPKSFIPDLPNSAQAANGTESPVRALQPDEAEDWPGRPQSHPPAPPVQAPSTSRRGLVRVTTQRALGQPLPPEPSASSIVPIPASSPPANATAPPLRWGPLRRVLSFSWELHVYGVGVLFLLPALLALVTVAAALAGPRLALVAAALVLVASGLRSAYMLTDPYGSQARLGVRAGLVLYNLPFPLLLTALAALTLLGLGAGLPQPLQKPLLLGIVAPVHGTCLLATDLFSTSPVLNLLTQGLSCAWGASVALGTLCLCRRRLLEGPRGWDASPGPRLLAVAGSLGLLASGLQLAASLWLYPGPGREGRFSWAWWGVHFWLRLLELTWALALALAALAATRPRPPTEHACWAKLLRLACPAPTGKSEVPERPNNCYAGPSGLGTGGLDISKSLIRNAAGEAGLPVTPGSGPWGSAASLGRGRPGGQRMSRGSVGPAPSLSELDLRPPSPINLSRSIDAALFREHLVRESVFQRCGLRGLASSPTGGALRPRRGSQPDAELDGAGTSLLRGRCRSLTEVCLRTSLPQHVMEPPVGAAAAGTSGSSLDSFSKGSLKISWNPWRHGLSSVDSLPLDELPSTVQLLPPPTPVPAPARAGEPQGEGQSRCKSSESHSASSDTIEL</sequence>
<protein>
    <recommendedName>
        <fullName>Proline-rich transmembrane protein 3</fullName>
    </recommendedName>
</protein>